<feature type="chain" id="PRO_0000213934" description="Large ribosomal subunit protein eL20y">
    <location>
        <begin position="1"/>
        <end position="178"/>
    </location>
</feature>
<feature type="sequence conflict" description="In Ref. 4." evidence="2" ref="4">
    <original>VRP</original>
    <variation>LDH</variation>
    <location>
        <begin position="158"/>
        <end position="160"/>
    </location>
</feature>
<reference key="1">
    <citation type="journal article" date="1999" name="Nature">
        <title>Sequence and analysis of chromosome 2 of the plant Arabidopsis thaliana.</title>
        <authorList>
            <person name="Lin X."/>
            <person name="Kaul S."/>
            <person name="Rounsley S.D."/>
            <person name="Shea T.P."/>
            <person name="Benito M.-I."/>
            <person name="Town C.D."/>
            <person name="Fujii C.Y."/>
            <person name="Mason T.M."/>
            <person name="Bowman C.L."/>
            <person name="Barnstead M.E."/>
            <person name="Feldblyum T.V."/>
            <person name="Buell C.R."/>
            <person name="Ketchum K.A."/>
            <person name="Lee J.J."/>
            <person name="Ronning C.M."/>
            <person name="Koo H.L."/>
            <person name="Moffat K.S."/>
            <person name="Cronin L.A."/>
            <person name="Shen M."/>
            <person name="Pai G."/>
            <person name="Van Aken S."/>
            <person name="Umayam L."/>
            <person name="Tallon L.J."/>
            <person name="Gill J.E."/>
            <person name="Adams M.D."/>
            <person name="Carrera A.J."/>
            <person name="Creasy T.H."/>
            <person name="Goodman H.M."/>
            <person name="Somerville C.R."/>
            <person name="Copenhaver G.P."/>
            <person name="Preuss D."/>
            <person name="Nierman W.C."/>
            <person name="White O."/>
            <person name="Eisen J.A."/>
            <person name="Salzberg S.L."/>
            <person name="Fraser C.M."/>
            <person name="Venter J.C."/>
        </authorList>
    </citation>
    <scope>NUCLEOTIDE SEQUENCE [LARGE SCALE GENOMIC DNA]</scope>
    <source>
        <strain>cv. Columbia</strain>
    </source>
</reference>
<reference key="2">
    <citation type="journal article" date="2017" name="Plant J.">
        <title>Araport11: a complete reannotation of the Arabidopsis thaliana reference genome.</title>
        <authorList>
            <person name="Cheng C.Y."/>
            <person name="Krishnakumar V."/>
            <person name="Chan A.P."/>
            <person name="Thibaud-Nissen F."/>
            <person name="Schobel S."/>
            <person name="Town C.D."/>
        </authorList>
    </citation>
    <scope>GENOME REANNOTATION</scope>
    <source>
        <strain>cv. Columbia</strain>
    </source>
</reference>
<reference key="3">
    <citation type="journal article" date="2003" name="Science">
        <title>Empirical analysis of transcriptional activity in the Arabidopsis genome.</title>
        <authorList>
            <person name="Yamada K."/>
            <person name="Lim J."/>
            <person name="Dale J.M."/>
            <person name="Chen H."/>
            <person name="Shinn P."/>
            <person name="Palm C.J."/>
            <person name="Southwick A.M."/>
            <person name="Wu H.C."/>
            <person name="Kim C.J."/>
            <person name="Nguyen M."/>
            <person name="Pham P.K."/>
            <person name="Cheuk R.F."/>
            <person name="Karlin-Newmann G."/>
            <person name="Liu S.X."/>
            <person name="Lam B."/>
            <person name="Sakano H."/>
            <person name="Wu T."/>
            <person name="Yu G."/>
            <person name="Miranda M."/>
            <person name="Quach H.L."/>
            <person name="Tripp M."/>
            <person name="Chang C.H."/>
            <person name="Lee J.M."/>
            <person name="Toriumi M.J."/>
            <person name="Chan M.M."/>
            <person name="Tang C.C."/>
            <person name="Onodera C.S."/>
            <person name="Deng J.M."/>
            <person name="Akiyama K."/>
            <person name="Ansari Y."/>
            <person name="Arakawa T."/>
            <person name="Banh J."/>
            <person name="Banno F."/>
            <person name="Bowser L."/>
            <person name="Brooks S.Y."/>
            <person name="Carninci P."/>
            <person name="Chao Q."/>
            <person name="Choy N."/>
            <person name="Enju A."/>
            <person name="Goldsmith A.D."/>
            <person name="Gurjal M."/>
            <person name="Hansen N.F."/>
            <person name="Hayashizaki Y."/>
            <person name="Johnson-Hopson C."/>
            <person name="Hsuan V.W."/>
            <person name="Iida K."/>
            <person name="Karnes M."/>
            <person name="Khan S."/>
            <person name="Koesema E."/>
            <person name="Ishida J."/>
            <person name="Jiang P.X."/>
            <person name="Jones T."/>
            <person name="Kawai J."/>
            <person name="Kamiya A."/>
            <person name="Meyers C."/>
            <person name="Nakajima M."/>
            <person name="Narusaka M."/>
            <person name="Seki M."/>
            <person name="Sakurai T."/>
            <person name="Satou M."/>
            <person name="Tamse R."/>
            <person name="Vaysberg M."/>
            <person name="Wallender E.K."/>
            <person name="Wong C."/>
            <person name="Yamamura Y."/>
            <person name="Yuan S."/>
            <person name="Shinozaki K."/>
            <person name="Davis R.W."/>
            <person name="Theologis A."/>
            <person name="Ecker J.R."/>
        </authorList>
    </citation>
    <scope>NUCLEOTIDE SEQUENCE [LARGE SCALE MRNA]</scope>
    <source>
        <strain>cv. Columbia</strain>
    </source>
</reference>
<reference key="4">
    <citation type="journal article" date="1993" name="Plant J.">
        <title>An inventory of 1152 expressed sequence tags obtained by partial sequencing of cDNAs from Arabidopsis thaliana.</title>
        <authorList>
            <person name="Hoefte H."/>
            <person name="Desprez T."/>
            <person name="Amselem J."/>
            <person name="Chiapello H."/>
            <person name="Rouze P."/>
            <person name="Caboche M."/>
            <person name="Moisan A."/>
            <person name="Jourjon M.-F."/>
            <person name="Charpenteau J.-L."/>
            <person name="Berthomieu P."/>
            <person name="Guerrier D."/>
            <person name="Giraudat J."/>
            <person name="Quigley F."/>
            <person name="Thomas F."/>
            <person name="Yu D.-Y."/>
            <person name="Mache R."/>
            <person name="Raynal M."/>
            <person name="Cooke R."/>
            <person name="Grellet F."/>
            <person name="Delseny M."/>
            <person name="Parmentier Y."/>
            <person name="de Marcillac G."/>
            <person name="Gigot C."/>
            <person name="Fleck J."/>
            <person name="Philipps G."/>
            <person name="Axelos M."/>
            <person name="Bardet C."/>
            <person name="Tremousaygue D."/>
            <person name="Lescure B."/>
        </authorList>
    </citation>
    <scope>NUCLEOTIDE SEQUENCE [LARGE SCALE MRNA] OF 69-160</scope>
    <source>
        <strain>cv. Columbia</strain>
    </source>
</reference>
<reference key="5">
    <citation type="journal article" date="2001" name="Plant Physiol.">
        <title>The organization of cytoplasmic ribosomal protein genes in the Arabidopsis genome.</title>
        <authorList>
            <person name="Barakat A."/>
            <person name="Szick-Miranda K."/>
            <person name="Chang I.-F."/>
            <person name="Guyot R."/>
            <person name="Blanc G."/>
            <person name="Cooke R."/>
            <person name="Delseny M."/>
            <person name="Bailey-Serres J."/>
        </authorList>
    </citation>
    <scope>GENE FAMILY ORGANIZATION</scope>
    <scope>NOMENCLATURE</scope>
</reference>
<reference key="6">
    <citation type="journal article" date="2007" name="Mol. Cell. Proteomics">
        <title>Multidimensional protein identification technology (MudPIT) analysis of ubiquitinated proteins in plants.</title>
        <authorList>
            <person name="Maor R."/>
            <person name="Jones A."/>
            <person name="Nuehse T.S."/>
            <person name="Studholme D.J."/>
            <person name="Peck S.C."/>
            <person name="Shirasu K."/>
        </authorList>
    </citation>
    <scope>IDENTIFICATION BY MASS SPECTROMETRY [LARGE SCALE ANALYSIS]</scope>
    <source>
        <strain>cv. Landsberg erecta</strain>
    </source>
</reference>
<reference key="7">
    <citation type="journal article" date="2023" name="Plant Cell">
        <title>An updated nomenclature for plant ribosomal protein genes.</title>
        <authorList>
            <person name="Scarpin M.R."/>
            <person name="Busche M."/>
            <person name="Martinez R.E."/>
            <person name="Harper L.C."/>
            <person name="Reiser L."/>
            <person name="Szakonyi D."/>
            <person name="Merchante C."/>
            <person name="Lan T."/>
            <person name="Xiong W."/>
            <person name="Mo B."/>
            <person name="Tang G."/>
            <person name="Chen X."/>
            <person name="Bailey-Serres J."/>
            <person name="Browning K.S."/>
            <person name="Brunkard J.O."/>
        </authorList>
    </citation>
    <scope>NOMENCLATURE</scope>
</reference>
<evidence type="ECO:0000303" key="1">
    <source>
    </source>
</evidence>
<evidence type="ECO:0000305" key="2"/>
<protein>
    <recommendedName>
        <fullName evidence="1">Large ribosomal subunit protein eL20y</fullName>
    </recommendedName>
    <alternativeName>
        <fullName>60S ribosomal protein L18a-2</fullName>
    </alternativeName>
</protein>
<keyword id="KW-1185">Reference proteome</keyword>
<keyword id="KW-0687">Ribonucleoprotein</keyword>
<keyword id="KW-0689">Ribosomal protein</keyword>
<comment type="similarity">
    <text evidence="2">Belongs to the eukaryotic ribosomal protein eL20 family.</text>
</comment>
<name>R18A2_ARATH</name>
<organism>
    <name type="scientific">Arabidopsis thaliana</name>
    <name type="common">Mouse-ear cress</name>
    <dbReference type="NCBI Taxonomy" id="3702"/>
    <lineage>
        <taxon>Eukaryota</taxon>
        <taxon>Viridiplantae</taxon>
        <taxon>Streptophyta</taxon>
        <taxon>Embryophyta</taxon>
        <taxon>Tracheophyta</taxon>
        <taxon>Spermatophyta</taxon>
        <taxon>Magnoliopsida</taxon>
        <taxon>eudicotyledons</taxon>
        <taxon>Gunneridae</taxon>
        <taxon>Pentapetalae</taxon>
        <taxon>rosids</taxon>
        <taxon>malvids</taxon>
        <taxon>Brassicales</taxon>
        <taxon>Brassicaceae</taxon>
        <taxon>Camelineae</taxon>
        <taxon>Arabidopsis</taxon>
    </lineage>
</organism>
<accession>P51418</accession>
<accession>O64699</accession>
<sequence>MGAFRFHQYQVVGRALPTEKDVQPKIYRMKLWATNEVRAKSKFWYFLRKLKKVKKSNGQMLAINEIYEKNPTTIKNFGIWLRYQSRTGYHNMYKEYRDTTLNGAVEQMYTEMASRHRVRFPCIQIIKTATVPAKLCKRESTKQFHNSKIKFPLVFRKVRPPSRKLKTTYKANKPNLFM</sequence>
<gene>
    <name type="primary">RPL18AB</name>
    <name type="ordered locus">At2g34480</name>
    <name type="ORF">T31E10.18</name>
</gene>
<proteinExistence type="evidence at protein level"/>
<dbReference type="EMBL" id="AC004077">
    <property type="protein sequence ID" value="AAC26708.1"/>
    <property type="molecule type" value="Genomic_DNA"/>
</dbReference>
<dbReference type="EMBL" id="AC004481">
    <property type="protein sequence ID" value="AAM14956.1"/>
    <property type="molecule type" value="Genomic_DNA"/>
</dbReference>
<dbReference type="EMBL" id="CP002685">
    <property type="protein sequence ID" value="AEC08980.1"/>
    <property type="molecule type" value="Genomic_DNA"/>
</dbReference>
<dbReference type="EMBL" id="AY042803">
    <property type="protein sequence ID" value="AAK68743.1"/>
    <property type="molecule type" value="mRNA"/>
</dbReference>
<dbReference type="EMBL" id="AY120778">
    <property type="protein sequence ID" value="AAM53336.1"/>
    <property type="molecule type" value="mRNA"/>
</dbReference>
<dbReference type="EMBL" id="BT000076">
    <property type="protein sequence ID" value="AAN15395.1"/>
    <property type="molecule type" value="mRNA"/>
</dbReference>
<dbReference type="EMBL" id="BT006559">
    <property type="protein sequence ID" value="AAP21367.1"/>
    <property type="molecule type" value="mRNA"/>
</dbReference>
<dbReference type="EMBL" id="Z18039">
    <property type="protein sequence ID" value="CAA79087.1"/>
    <property type="molecule type" value="mRNA"/>
</dbReference>
<dbReference type="PIR" id="T02335">
    <property type="entry name" value="T02335"/>
</dbReference>
<dbReference type="RefSeq" id="NP_180995.1">
    <property type="nucleotide sequence ID" value="NM_129000.4"/>
</dbReference>
<dbReference type="SMR" id="P51418"/>
<dbReference type="BioGRID" id="3358">
    <property type="interactions" value="44"/>
</dbReference>
<dbReference type="FunCoup" id="P51418">
    <property type="interactions" value="3634"/>
</dbReference>
<dbReference type="IntAct" id="P51418">
    <property type="interactions" value="1"/>
</dbReference>
<dbReference type="STRING" id="3702.P51418"/>
<dbReference type="MetOSite" id="P51418"/>
<dbReference type="PaxDb" id="3702-AT2G34480.1"/>
<dbReference type="EnsemblPlants" id="AT2G34480.1">
    <property type="protein sequence ID" value="AT2G34480.1"/>
    <property type="gene ID" value="AT2G34480"/>
</dbReference>
<dbReference type="GeneID" id="818011"/>
<dbReference type="Gramene" id="AT2G34480.1">
    <property type="protein sequence ID" value="AT2G34480.1"/>
    <property type="gene ID" value="AT2G34480"/>
</dbReference>
<dbReference type="KEGG" id="ath:AT2G34480"/>
<dbReference type="Araport" id="AT2G34480"/>
<dbReference type="TAIR" id="AT2G34480">
    <property type="gene designation" value="L18AB"/>
</dbReference>
<dbReference type="eggNOG" id="KOG0829">
    <property type="taxonomic scope" value="Eukaryota"/>
</dbReference>
<dbReference type="HOGENOM" id="CLU_080773_1_1_1"/>
<dbReference type="InParanoid" id="P51418"/>
<dbReference type="OrthoDB" id="1027569at2759"/>
<dbReference type="PhylomeDB" id="P51418"/>
<dbReference type="CD-CODE" id="4299E36E">
    <property type="entry name" value="Nucleolus"/>
</dbReference>
<dbReference type="PRO" id="PR:P51418"/>
<dbReference type="Proteomes" id="UP000006548">
    <property type="component" value="Chromosome 2"/>
</dbReference>
<dbReference type="ExpressionAtlas" id="P51418">
    <property type="expression patterns" value="baseline and differential"/>
</dbReference>
<dbReference type="GO" id="GO:0022625">
    <property type="term" value="C:cytosolic large ribosomal subunit"/>
    <property type="evidence" value="ECO:0007005"/>
    <property type="project" value="TAIR"/>
</dbReference>
<dbReference type="GO" id="GO:0022626">
    <property type="term" value="C:cytosolic ribosome"/>
    <property type="evidence" value="ECO:0007005"/>
    <property type="project" value="TAIR"/>
</dbReference>
<dbReference type="GO" id="GO:0005783">
    <property type="term" value="C:endoplasmic reticulum"/>
    <property type="evidence" value="ECO:0007005"/>
    <property type="project" value="TAIR"/>
</dbReference>
<dbReference type="GO" id="GO:0005634">
    <property type="term" value="C:nucleus"/>
    <property type="evidence" value="ECO:0000314"/>
    <property type="project" value="TAIR"/>
</dbReference>
<dbReference type="GO" id="GO:0000325">
    <property type="term" value="C:plant-type vacuole"/>
    <property type="evidence" value="ECO:0007005"/>
    <property type="project" value="TAIR"/>
</dbReference>
<dbReference type="GO" id="GO:0003729">
    <property type="term" value="F:mRNA binding"/>
    <property type="evidence" value="ECO:0000314"/>
    <property type="project" value="TAIR"/>
</dbReference>
<dbReference type="GO" id="GO:0003735">
    <property type="term" value="F:structural constituent of ribosome"/>
    <property type="evidence" value="ECO:0000314"/>
    <property type="project" value="CAFA"/>
</dbReference>
<dbReference type="GO" id="GO:0009793">
    <property type="term" value="P:embryo development ending in seed dormancy"/>
    <property type="evidence" value="ECO:0000315"/>
    <property type="project" value="TAIR"/>
</dbReference>
<dbReference type="GO" id="GO:0009860">
    <property type="term" value="P:pollen tube growth"/>
    <property type="evidence" value="ECO:0000315"/>
    <property type="project" value="TAIR"/>
</dbReference>
<dbReference type="GO" id="GO:0006412">
    <property type="term" value="P:translation"/>
    <property type="evidence" value="ECO:0007669"/>
    <property type="project" value="InterPro"/>
</dbReference>
<dbReference type="FunFam" id="3.10.20.10:FF:000001">
    <property type="entry name" value="60S ribosomal protein L18a"/>
    <property type="match status" value="1"/>
</dbReference>
<dbReference type="FunFam" id="3.10.20.10:FF:000002">
    <property type="entry name" value="60S ribosomal protein L18a"/>
    <property type="match status" value="1"/>
</dbReference>
<dbReference type="Gene3D" id="3.10.20.10">
    <property type="match status" value="2"/>
</dbReference>
<dbReference type="HAMAP" id="MF_00273">
    <property type="entry name" value="Ribosomal_eL20"/>
    <property type="match status" value="1"/>
</dbReference>
<dbReference type="InterPro" id="IPR028877">
    <property type="entry name" value="Ribosomal_eL20"/>
</dbReference>
<dbReference type="InterPro" id="IPR023573">
    <property type="entry name" value="Ribosomal_eL20_dom"/>
</dbReference>
<dbReference type="InterPro" id="IPR021138">
    <property type="entry name" value="Ribosomal_eL20_eukaryotes"/>
</dbReference>
<dbReference type="PANTHER" id="PTHR10052">
    <property type="entry name" value="60S RIBOSOMAL PROTEIN L18A"/>
    <property type="match status" value="1"/>
</dbReference>
<dbReference type="Pfam" id="PF01775">
    <property type="entry name" value="Ribosomal_L18A"/>
    <property type="match status" value="1"/>
</dbReference>
<dbReference type="PIRSF" id="PIRSF002190">
    <property type="entry name" value="Ribosomal_L18a"/>
    <property type="match status" value="1"/>
</dbReference>
<dbReference type="SUPFAM" id="SSF160374">
    <property type="entry name" value="RplX-like"/>
    <property type="match status" value="1"/>
</dbReference>